<protein>
    <recommendedName>
        <fullName evidence="3">Gigasin-6</fullName>
    </recommendedName>
</protein>
<feature type="signal peptide" evidence="1">
    <location>
        <begin position="1"/>
        <end position="22"/>
    </location>
</feature>
<feature type="chain" id="PRO_0000403311" description="Gigasin-6" evidence="1">
    <location>
        <begin position="23"/>
        <end position="302"/>
    </location>
</feature>
<feature type="transmembrane region" description="Helical" evidence="1">
    <location>
        <begin position="75"/>
        <end position="95"/>
    </location>
</feature>
<name>GIGA6_MAGGI</name>
<comment type="subcellular location">
    <subcellularLocation>
        <location evidence="1">Membrane</location>
        <topology evidence="1">Single-pass membrane protein</topology>
    </subcellularLocation>
</comment>
<comment type="tissue specificity">
    <text evidence="2">Component of the organic matrix of calcified shell layers.</text>
</comment>
<accession>P86789</accession>
<dbReference type="EMBL" id="CU992451">
    <property type="status" value="NOT_ANNOTATED_CDS"/>
    <property type="molecule type" value="mRNA"/>
</dbReference>
<dbReference type="SMR" id="P86789"/>
<dbReference type="HOGENOM" id="CLU_020027_14_3_1"/>
<dbReference type="InParanoid" id="P86789"/>
<dbReference type="Proteomes" id="UP000005408">
    <property type="component" value="Unplaced"/>
</dbReference>
<dbReference type="GO" id="GO:0016020">
    <property type="term" value="C:membrane"/>
    <property type="evidence" value="ECO:0007669"/>
    <property type="project" value="UniProtKB-SubCell"/>
</dbReference>
<dbReference type="Gene3D" id="3.40.710.10">
    <property type="entry name" value="DD-peptidase/beta-lactamase superfamily"/>
    <property type="match status" value="1"/>
</dbReference>
<dbReference type="InterPro" id="IPR050491">
    <property type="entry name" value="Bact_CellWall_Synth/Modif"/>
</dbReference>
<dbReference type="InterPro" id="IPR001466">
    <property type="entry name" value="Beta-lactam-related"/>
</dbReference>
<dbReference type="InterPro" id="IPR012338">
    <property type="entry name" value="Beta-lactam/transpept-like"/>
</dbReference>
<dbReference type="PANTHER" id="PTHR46825:SF15">
    <property type="entry name" value="BETA-LACTAMASE-RELATED DOMAIN-CONTAINING PROTEIN"/>
    <property type="match status" value="1"/>
</dbReference>
<dbReference type="PANTHER" id="PTHR46825">
    <property type="entry name" value="D-ALANYL-D-ALANINE-CARBOXYPEPTIDASE/ENDOPEPTIDASE AMPH"/>
    <property type="match status" value="1"/>
</dbReference>
<dbReference type="Pfam" id="PF00144">
    <property type="entry name" value="Beta-lactamase"/>
    <property type="match status" value="1"/>
</dbReference>
<dbReference type="SUPFAM" id="SSF56601">
    <property type="entry name" value="beta-lactamase/transpeptidase-like"/>
    <property type="match status" value="1"/>
</dbReference>
<organism>
    <name type="scientific">Magallana gigas</name>
    <name type="common">Pacific oyster</name>
    <name type="synonym">Crassostrea gigas</name>
    <dbReference type="NCBI Taxonomy" id="29159"/>
    <lineage>
        <taxon>Eukaryota</taxon>
        <taxon>Metazoa</taxon>
        <taxon>Spiralia</taxon>
        <taxon>Lophotrochozoa</taxon>
        <taxon>Mollusca</taxon>
        <taxon>Bivalvia</taxon>
        <taxon>Autobranchia</taxon>
        <taxon>Pteriomorphia</taxon>
        <taxon>Ostreida</taxon>
        <taxon>Ostreoidea</taxon>
        <taxon>Ostreidae</taxon>
        <taxon>Magallana</taxon>
    </lineage>
</organism>
<sequence>MSSRNLLYSSVVLFLVLFYCHGGPLEDRVRSTIQEVYKNCRKDKNPGVIVSVVKDGQNVLTEALGVKDKISGEAITTDTLFGLGGISALFANILIAKKNAEYAEMDEDTTLRNLFGNNKLFEKSKLRSRYATSLDVMAHRLGFKNTPHLFLDDTVTRGDPVIQRISSMKPRGRFRDSFYYNELTYSILTTIGERLGRDSWENLVKNEIYTPLGMAKSKFFTTLDPSTVDIARAYKEDDGSLFPVPFEFLKKWSSLCSTTCVLSSANDMSKFMNYLLGQRKPSWTKPCVTGPRKFTLILFDAI</sequence>
<proteinExistence type="evidence at protein level"/>
<evidence type="ECO:0000255" key="1"/>
<evidence type="ECO:0000269" key="2">
    <source ref="2"/>
</evidence>
<evidence type="ECO:0000303" key="3">
    <source ref="2"/>
</evidence>
<evidence type="ECO:0000305" key="4"/>
<reference evidence="4" key="1">
    <citation type="journal article" date="2009" name="BMC Genomics">
        <title>Generation and analysis of a 29,745 unique Expressed Sequence Tags from the Pacific oyster (Crassostrea gigas) assembled into a publicly accessible database: the GigasDatabase.</title>
        <authorList>
            <person name="Fleury E."/>
            <person name="Huvet A."/>
            <person name="Lelong C."/>
            <person name="de Lorgeril J."/>
            <person name="Boulo V."/>
            <person name="Gueguen Y."/>
            <person name="Bachere E."/>
            <person name="Tanguy A."/>
            <person name="Moraga D."/>
            <person name="Fabioux C."/>
            <person name="Lindeque P."/>
            <person name="Shaw J."/>
            <person name="Reinhardt R."/>
            <person name="Prunet P."/>
            <person name="Davey G."/>
            <person name="Lapegue S."/>
            <person name="Sauvage C."/>
            <person name="Corporeau C."/>
            <person name="Moal J."/>
            <person name="Gavory F."/>
            <person name="Wincker P."/>
            <person name="Moreews F."/>
            <person name="Klopp C."/>
            <person name="Mathieu M."/>
            <person name="Boudry P."/>
            <person name="Favrel P."/>
        </authorList>
    </citation>
    <scope>NUCLEOTIDE SEQUENCE [MRNA]</scope>
</reference>
<reference evidence="4" key="2">
    <citation type="journal article" date="2010" name="FEBS Lett.">
        <title>Proteomic identification of novel proteins from the calcifying shell matrix of the Pacific oyster Crassostrea gigas.</title>
        <authorList>
            <person name="Marie B."/>
            <person name="Zanella-Cleon I."/>
            <person name="Becchi M."/>
            <person name="Marin F."/>
        </authorList>
    </citation>
    <scope>PROTEIN SEQUENCE OF 31-38 AND 198-205</scope>
    <scope>TISSUE SPECIFICITY</scope>
    <source>
        <tissue evidence="2">Shell</tissue>
    </source>
</reference>
<keyword id="KW-0903">Direct protein sequencing</keyword>
<keyword id="KW-0472">Membrane</keyword>
<keyword id="KW-1185">Reference proteome</keyword>
<keyword id="KW-0732">Signal</keyword>
<keyword id="KW-0812">Transmembrane</keyword>
<keyword id="KW-1133">Transmembrane helix</keyword>